<protein>
    <recommendedName>
        <fullName>GDP-mannose transporter 1</fullName>
        <shortName>GMT 1</shortName>
    </recommendedName>
    <alternativeName>
        <fullName>Low dye-binding protein 3</fullName>
    </alternativeName>
    <alternativeName>
        <fullName>Morphogenesis checkpoint-dependent protein 3</fullName>
    </alternativeName>
    <alternativeName>
        <fullName>Vanadate resistance glycosylation protein 4</fullName>
    </alternativeName>
</protein>
<proteinExistence type="inferred from homology"/>
<dbReference type="EMBL" id="AAFW02000099">
    <property type="protein sequence ID" value="EDN61904.1"/>
    <property type="molecule type" value="Genomic_DNA"/>
</dbReference>
<dbReference type="SMR" id="A6ZTW6"/>
<dbReference type="GlyCosmos" id="A6ZTW6">
    <property type="glycosylation" value="4 sites, No reported glycans"/>
</dbReference>
<dbReference type="HOGENOM" id="CLU_025360_1_2_1"/>
<dbReference type="Proteomes" id="UP000007060">
    <property type="component" value="Unassembled WGS sequence"/>
</dbReference>
<dbReference type="GO" id="GO:0030659">
    <property type="term" value="C:cytoplasmic vesicle membrane"/>
    <property type="evidence" value="ECO:0007669"/>
    <property type="project" value="UniProtKB-SubCell"/>
</dbReference>
<dbReference type="GO" id="GO:0005789">
    <property type="term" value="C:endoplasmic reticulum membrane"/>
    <property type="evidence" value="ECO:0007669"/>
    <property type="project" value="UniProtKB-SubCell"/>
</dbReference>
<dbReference type="GO" id="GO:0000139">
    <property type="term" value="C:Golgi membrane"/>
    <property type="evidence" value="ECO:0007669"/>
    <property type="project" value="UniProtKB-SubCell"/>
</dbReference>
<dbReference type="GO" id="GO:0055085">
    <property type="term" value="P:transmembrane transport"/>
    <property type="evidence" value="ECO:0007669"/>
    <property type="project" value="InterPro"/>
</dbReference>
<dbReference type="InterPro" id="IPR013657">
    <property type="entry name" value="SCL35B1-4/HUT1"/>
</dbReference>
<dbReference type="InterPro" id="IPR050186">
    <property type="entry name" value="TPT_transporter"/>
</dbReference>
<dbReference type="NCBIfam" id="TIGR00803">
    <property type="entry name" value="nst"/>
    <property type="match status" value="1"/>
</dbReference>
<dbReference type="PANTHER" id="PTHR11132">
    <property type="entry name" value="SOLUTE CARRIER FAMILY 35"/>
    <property type="match status" value="1"/>
</dbReference>
<dbReference type="Pfam" id="PF08449">
    <property type="entry name" value="UAA"/>
    <property type="match status" value="1"/>
</dbReference>
<dbReference type="SUPFAM" id="SSF103481">
    <property type="entry name" value="Multidrug resistance efflux transporter EmrE"/>
    <property type="match status" value="1"/>
</dbReference>
<comment type="function">
    <text evidence="1">Involved in the import of GDP-mannose from the cytoplasm into the Golgi lumen. Defective copy causes severe glycosylation defect and abnormal retention of soluble endoplasmic reticulum proteins. Involved in vanadate sensitivity (By similarity).</text>
</comment>
<comment type="subunit">
    <text evidence="1">Homooligomer.</text>
</comment>
<comment type="subcellular location">
    <subcellularLocation>
        <location evidence="1">Golgi apparatus membrane</location>
        <topology evidence="1">Multi-pass membrane protein</topology>
    </subcellularLocation>
    <subcellularLocation>
        <location evidence="1">Cytoplasmic vesicle membrane</location>
        <topology evidence="1">Multi-pass membrane protein</topology>
    </subcellularLocation>
    <subcellularLocation>
        <location evidence="1">Endoplasmic reticulum membrane</location>
        <topology evidence="1">Multi-pass membrane protein</topology>
    </subcellularLocation>
    <text evidence="1">Recycles between the Golgi apparatus and the endoplasmic reticulum.</text>
</comment>
<comment type="similarity">
    <text evidence="3">Belongs to the TPT transporter family. SLC35D subfamily.</text>
</comment>
<gene>
    <name type="primary">VRG4</name>
    <name type="synonym">GOG5</name>
    <name type="synonym">LDB3</name>
    <name type="synonym">MCD3</name>
    <name type="synonym">VAN2</name>
    <name type="synonym">VIG4</name>
    <name type="ORF">SCY_1849</name>
</gene>
<accession>A6ZTW6</accession>
<feature type="chain" id="PRO_0000333541" description="GDP-mannose transporter 1">
    <location>
        <begin position="1"/>
        <end position="337"/>
    </location>
</feature>
<feature type="topological domain" description="Cytoplasmic" evidence="1">
    <location>
        <begin position="1"/>
        <end position="16"/>
    </location>
</feature>
<feature type="transmembrane region" description="Helical" evidence="2">
    <location>
        <begin position="17"/>
        <end position="37"/>
    </location>
</feature>
<feature type="topological domain" description="Lumenal" evidence="1">
    <location>
        <begin position="38"/>
        <end position="51"/>
    </location>
</feature>
<feature type="transmembrane region" description="Helical" evidence="2">
    <location>
        <begin position="52"/>
        <end position="72"/>
    </location>
</feature>
<feature type="topological domain" description="Cytoplasmic" evidence="1">
    <location>
        <begin position="73"/>
        <end position="92"/>
    </location>
</feature>
<feature type="transmembrane region" description="Helical" evidence="2">
    <location>
        <begin position="93"/>
        <end position="113"/>
    </location>
</feature>
<feature type="topological domain" description="Lumenal" evidence="1">
    <location>
        <begin position="114"/>
        <end position="119"/>
    </location>
</feature>
<feature type="transmembrane region" description="Helical" evidence="2">
    <location>
        <begin position="120"/>
        <end position="140"/>
    </location>
</feature>
<feature type="topological domain" description="Cytoplasmic" evidence="1">
    <location>
        <begin position="141"/>
        <end position="144"/>
    </location>
</feature>
<feature type="transmembrane region" description="Helical" evidence="2">
    <location>
        <begin position="145"/>
        <end position="165"/>
    </location>
</feature>
<feature type="topological domain" description="Lumenal" evidence="1">
    <location>
        <begin position="166"/>
        <end position="180"/>
    </location>
</feature>
<feature type="transmembrane region" description="Helical" evidence="2">
    <location>
        <begin position="181"/>
        <end position="201"/>
    </location>
</feature>
<feature type="topological domain" description="Cytoplasmic" evidence="1">
    <location>
        <begin position="202"/>
        <end position="215"/>
    </location>
</feature>
<feature type="transmembrane region" description="Helical" evidence="2">
    <location>
        <begin position="216"/>
        <end position="236"/>
    </location>
</feature>
<feature type="topological domain" description="Lumenal" evidence="1">
    <location>
        <begin position="237"/>
        <end position="252"/>
    </location>
</feature>
<feature type="transmembrane region" description="Helical" evidence="2">
    <location>
        <begin position="253"/>
        <end position="273"/>
    </location>
</feature>
<feature type="topological domain" description="Cytoplasmic" evidence="1">
    <location>
        <begin position="274"/>
        <end position="279"/>
    </location>
</feature>
<feature type="transmembrane region" description="Helical" evidence="2">
    <location>
        <begin position="280"/>
        <end position="300"/>
    </location>
</feature>
<feature type="topological domain" description="Lumenal" evidence="1">
    <location>
        <begin position="301"/>
        <end position="304"/>
    </location>
</feature>
<feature type="transmembrane region" description="Helical" evidence="2">
    <location>
        <begin position="305"/>
        <end position="325"/>
    </location>
</feature>
<feature type="topological domain" description="Cytoplasmic" evidence="1">
    <location>
        <begin position="326"/>
        <end position="337"/>
    </location>
</feature>
<feature type="glycosylation site" description="N-linked (GlcNAc...) asparagine" evidence="2">
    <location>
        <position position="119"/>
    </location>
</feature>
<feature type="glycosylation site" description="N-linked (GlcNAc...) asparagine" evidence="2">
    <location>
        <position position="242"/>
    </location>
</feature>
<feature type="glycosylation site" description="N-linked (GlcNAc...) asparagine" evidence="2">
    <location>
        <position position="246"/>
    </location>
</feature>
<feature type="glycosylation site" description="N-linked (GlcNAc...) asparagine" evidence="2">
    <location>
        <position position="249"/>
    </location>
</feature>
<name>GMT1_YEAS7</name>
<evidence type="ECO:0000250" key="1"/>
<evidence type="ECO:0000255" key="2"/>
<evidence type="ECO:0000305" key="3"/>
<reference key="1">
    <citation type="journal article" date="2007" name="Proc. Natl. Acad. Sci. U.S.A.">
        <title>Genome sequencing and comparative analysis of Saccharomyces cerevisiae strain YJM789.</title>
        <authorList>
            <person name="Wei W."/>
            <person name="McCusker J.H."/>
            <person name="Hyman R.W."/>
            <person name="Jones T."/>
            <person name="Ning Y."/>
            <person name="Cao Z."/>
            <person name="Gu Z."/>
            <person name="Bruno D."/>
            <person name="Miranda M."/>
            <person name="Nguyen M."/>
            <person name="Wilhelmy J."/>
            <person name="Komp C."/>
            <person name="Tamse R."/>
            <person name="Wang X."/>
            <person name="Jia P."/>
            <person name="Luedi P."/>
            <person name="Oefner P.J."/>
            <person name="David L."/>
            <person name="Dietrich F.S."/>
            <person name="Li Y."/>
            <person name="Davis R.W."/>
            <person name="Steinmetz L.M."/>
        </authorList>
    </citation>
    <scope>NUCLEOTIDE SEQUENCE [LARGE SCALE GENOMIC DNA]</scope>
    <source>
        <strain>YJM789</strain>
    </source>
</reference>
<sequence>MSELKTGHAGHNPWASVANSGPISILSYCGSSILMTVTNKFVVNLKDFNMNFVMLFVQSLVCTITLIILRILGYAKFRSLNKTDAKNWFPISFLLVLMIYTSSKALQYLAVPIYTIFKNLTIILIAYGEVLFFGGSVTSMELSSFLLMVLSSVVATWGDQQAVAAKAASLAEGAAGAVASFNPGYFWMFTNCITSALFVLIMRKRIKLTNFKDFDTMFYNNVLALPILLLFSFCVEDWSSVNLTNNFSNDSLTAMIISGVASVGISYCSGWCVRVTSSTTYSMVGALNKLPIALSGLIFFDAPRNFLSILSIFIGFLSGIIYAVAKQKKQQAQPLRK</sequence>
<keyword id="KW-0968">Cytoplasmic vesicle</keyword>
<keyword id="KW-0256">Endoplasmic reticulum</keyword>
<keyword id="KW-0325">Glycoprotein</keyword>
<keyword id="KW-0333">Golgi apparatus</keyword>
<keyword id="KW-0472">Membrane</keyword>
<keyword id="KW-0762">Sugar transport</keyword>
<keyword id="KW-0812">Transmembrane</keyword>
<keyword id="KW-1133">Transmembrane helix</keyword>
<keyword id="KW-0813">Transport</keyword>
<organism>
    <name type="scientific">Saccharomyces cerevisiae (strain YJM789)</name>
    <name type="common">Baker's yeast</name>
    <dbReference type="NCBI Taxonomy" id="307796"/>
    <lineage>
        <taxon>Eukaryota</taxon>
        <taxon>Fungi</taxon>
        <taxon>Dikarya</taxon>
        <taxon>Ascomycota</taxon>
        <taxon>Saccharomycotina</taxon>
        <taxon>Saccharomycetes</taxon>
        <taxon>Saccharomycetales</taxon>
        <taxon>Saccharomycetaceae</taxon>
        <taxon>Saccharomyces</taxon>
    </lineage>
</organism>